<reference key="1">
    <citation type="submission" date="2008-10" db="EMBL/GenBank/DDBJ databases">
        <title>Genome sequence of Bacillus cereus AH820.</title>
        <authorList>
            <person name="Dodson R.J."/>
            <person name="Durkin A.S."/>
            <person name="Rosovitz M.J."/>
            <person name="Rasko D.A."/>
            <person name="Hoffmaster A."/>
            <person name="Ravel J."/>
            <person name="Sutton G."/>
        </authorList>
    </citation>
    <scope>NUCLEOTIDE SEQUENCE [LARGE SCALE GENOMIC DNA]</scope>
    <source>
        <strain>AH820</strain>
    </source>
</reference>
<evidence type="ECO:0000255" key="1">
    <source>
        <dbReference type="HAMAP-Rule" id="MF_00223"/>
    </source>
</evidence>
<comment type="catalytic activity">
    <reaction evidence="1">
        <text>GTP + H2O = 7,8-dihydroneopterin 3'-triphosphate + formate + H(+)</text>
        <dbReference type="Rhea" id="RHEA:17473"/>
        <dbReference type="ChEBI" id="CHEBI:15377"/>
        <dbReference type="ChEBI" id="CHEBI:15378"/>
        <dbReference type="ChEBI" id="CHEBI:15740"/>
        <dbReference type="ChEBI" id="CHEBI:37565"/>
        <dbReference type="ChEBI" id="CHEBI:58462"/>
        <dbReference type="EC" id="3.5.4.16"/>
    </reaction>
</comment>
<comment type="pathway">
    <text evidence="1">Cofactor biosynthesis; 7,8-dihydroneopterin triphosphate biosynthesis; 7,8-dihydroneopterin triphosphate from GTP: step 1/1.</text>
</comment>
<comment type="subunit">
    <text evidence="1">Homomer.</text>
</comment>
<comment type="similarity">
    <text evidence="1">Belongs to the GTP cyclohydrolase I family.</text>
</comment>
<organism>
    <name type="scientific">Bacillus cereus (strain AH820)</name>
    <dbReference type="NCBI Taxonomy" id="405535"/>
    <lineage>
        <taxon>Bacteria</taxon>
        <taxon>Bacillati</taxon>
        <taxon>Bacillota</taxon>
        <taxon>Bacilli</taxon>
        <taxon>Bacillales</taxon>
        <taxon>Bacillaceae</taxon>
        <taxon>Bacillus</taxon>
        <taxon>Bacillus cereus group</taxon>
    </lineage>
</organism>
<name>GCH1_BACC0</name>
<gene>
    <name evidence="1" type="primary">folE</name>
    <name type="ordered locus">BCAH820_1605</name>
</gene>
<feature type="chain" id="PRO_1000190069" description="GTP cyclohydrolase 1">
    <location>
        <begin position="1"/>
        <end position="189"/>
    </location>
</feature>
<feature type="binding site" evidence="1">
    <location>
        <position position="78"/>
    </location>
    <ligand>
        <name>Zn(2+)</name>
        <dbReference type="ChEBI" id="CHEBI:29105"/>
    </ligand>
</feature>
<feature type="binding site" evidence="1">
    <location>
        <position position="81"/>
    </location>
    <ligand>
        <name>Zn(2+)</name>
        <dbReference type="ChEBI" id="CHEBI:29105"/>
    </ligand>
</feature>
<feature type="binding site" evidence="1">
    <location>
        <position position="150"/>
    </location>
    <ligand>
        <name>Zn(2+)</name>
        <dbReference type="ChEBI" id="CHEBI:29105"/>
    </ligand>
</feature>
<sequence>MAKVNLEQIEHAVRLILEAIGDDPNREGVLDTPKRVAKMYAEVFSGMHEDPKEHLHKVFGEDHEELVLVKDIPFYSMCEHHLVPFYGVAHVAYIPQGGKVTGLSKLARTVDTIARRPQLQERITSTVANSIMEVLEPHGVMVVVEAEHMCMTMRGVKKPGAKTVTTAVRGVLENDAAARSEILSFIKTK</sequence>
<proteinExistence type="inferred from homology"/>
<keyword id="KW-0378">Hydrolase</keyword>
<keyword id="KW-0479">Metal-binding</keyword>
<keyword id="KW-0554">One-carbon metabolism</keyword>
<keyword id="KW-0862">Zinc</keyword>
<protein>
    <recommendedName>
        <fullName evidence="1">GTP cyclohydrolase 1</fullName>
        <ecNumber evidence="1">3.5.4.16</ecNumber>
    </recommendedName>
    <alternativeName>
        <fullName evidence="1">GTP cyclohydrolase I</fullName>
        <shortName evidence="1">GTP-CH-I</shortName>
    </alternativeName>
</protein>
<dbReference type="EC" id="3.5.4.16" evidence="1"/>
<dbReference type="EMBL" id="CP001283">
    <property type="protein sequence ID" value="ACK91676.1"/>
    <property type="molecule type" value="Genomic_DNA"/>
</dbReference>
<dbReference type="RefSeq" id="WP_001151482.1">
    <property type="nucleotide sequence ID" value="NC_011773.1"/>
</dbReference>
<dbReference type="SMR" id="B7JGZ6"/>
<dbReference type="GeneID" id="93009529"/>
<dbReference type="KEGG" id="bcu:BCAH820_1605"/>
<dbReference type="HOGENOM" id="CLU_049768_3_3_9"/>
<dbReference type="UniPathway" id="UPA00848">
    <property type="reaction ID" value="UER00151"/>
</dbReference>
<dbReference type="Proteomes" id="UP000001363">
    <property type="component" value="Chromosome"/>
</dbReference>
<dbReference type="GO" id="GO:0005737">
    <property type="term" value="C:cytoplasm"/>
    <property type="evidence" value="ECO:0007669"/>
    <property type="project" value="TreeGrafter"/>
</dbReference>
<dbReference type="GO" id="GO:0005525">
    <property type="term" value="F:GTP binding"/>
    <property type="evidence" value="ECO:0007669"/>
    <property type="project" value="TreeGrafter"/>
</dbReference>
<dbReference type="GO" id="GO:0003934">
    <property type="term" value="F:GTP cyclohydrolase I activity"/>
    <property type="evidence" value="ECO:0007669"/>
    <property type="project" value="UniProtKB-UniRule"/>
</dbReference>
<dbReference type="GO" id="GO:0008270">
    <property type="term" value="F:zinc ion binding"/>
    <property type="evidence" value="ECO:0007669"/>
    <property type="project" value="UniProtKB-UniRule"/>
</dbReference>
<dbReference type="GO" id="GO:0006730">
    <property type="term" value="P:one-carbon metabolic process"/>
    <property type="evidence" value="ECO:0007669"/>
    <property type="project" value="UniProtKB-UniRule"/>
</dbReference>
<dbReference type="GO" id="GO:0006729">
    <property type="term" value="P:tetrahydrobiopterin biosynthetic process"/>
    <property type="evidence" value="ECO:0007669"/>
    <property type="project" value="TreeGrafter"/>
</dbReference>
<dbReference type="GO" id="GO:0046654">
    <property type="term" value="P:tetrahydrofolate biosynthetic process"/>
    <property type="evidence" value="ECO:0007669"/>
    <property type="project" value="UniProtKB-UniRule"/>
</dbReference>
<dbReference type="CDD" id="cd00642">
    <property type="entry name" value="GTP_cyclohydro1"/>
    <property type="match status" value="1"/>
</dbReference>
<dbReference type="FunFam" id="1.10.286.10:FF:000001">
    <property type="entry name" value="GTP cyclohydrolase 1"/>
    <property type="match status" value="1"/>
</dbReference>
<dbReference type="FunFam" id="3.30.1130.10:FF:000001">
    <property type="entry name" value="GTP cyclohydrolase 1"/>
    <property type="match status" value="1"/>
</dbReference>
<dbReference type="Gene3D" id="1.10.286.10">
    <property type="match status" value="1"/>
</dbReference>
<dbReference type="Gene3D" id="3.30.1130.10">
    <property type="match status" value="1"/>
</dbReference>
<dbReference type="HAMAP" id="MF_00223">
    <property type="entry name" value="FolE"/>
    <property type="match status" value="1"/>
</dbReference>
<dbReference type="InterPro" id="IPR043133">
    <property type="entry name" value="GTP-CH-I_C/QueF"/>
</dbReference>
<dbReference type="InterPro" id="IPR043134">
    <property type="entry name" value="GTP-CH-I_N"/>
</dbReference>
<dbReference type="InterPro" id="IPR001474">
    <property type="entry name" value="GTP_CycHdrlase_I"/>
</dbReference>
<dbReference type="InterPro" id="IPR018234">
    <property type="entry name" value="GTP_CycHdrlase_I_CS"/>
</dbReference>
<dbReference type="InterPro" id="IPR020602">
    <property type="entry name" value="GTP_CycHdrlase_I_dom"/>
</dbReference>
<dbReference type="NCBIfam" id="TIGR00063">
    <property type="entry name" value="folE"/>
    <property type="match status" value="1"/>
</dbReference>
<dbReference type="NCBIfam" id="NF006825">
    <property type="entry name" value="PRK09347.1-2"/>
    <property type="match status" value="1"/>
</dbReference>
<dbReference type="NCBIfam" id="NF006826">
    <property type="entry name" value="PRK09347.1-3"/>
    <property type="match status" value="1"/>
</dbReference>
<dbReference type="PANTHER" id="PTHR11109:SF7">
    <property type="entry name" value="GTP CYCLOHYDROLASE 1"/>
    <property type="match status" value="1"/>
</dbReference>
<dbReference type="PANTHER" id="PTHR11109">
    <property type="entry name" value="GTP CYCLOHYDROLASE I"/>
    <property type="match status" value="1"/>
</dbReference>
<dbReference type="Pfam" id="PF01227">
    <property type="entry name" value="GTP_cyclohydroI"/>
    <property type="match status" value="1"/>
</dbReference>
<dbReference type="SUPFAM" id="SSF55620">
    <property type="entry name" value="Tetrahydrobiopterin biosynthesis enzymes-like"/>
    <property type="match status" value="1"/>
</dbReference>
<dbReference type="PROSITE" id="PS00859">
    <property type="entry name" value="GTP_CYCLOHYDROL_1_1"/>
    <property type="match status" value="1"/>
</dbReference>
<dbReference type="PROSITE" id="PS00860">
    <property type="entry name" value="GTP_CYCLOHYDROL_1_2"/>
    <property type="match status" value="1"/>
</dbReference>
<accession>B7JGZ6</accession>